<keyword id="KW-0001">2Fe-2S</keyword>
<keyword id="KW-0004">4Fe-4S</keyword>
<keyword id="KW-0093">Biotin biosynthesis</keyword>
<keyword id="KW-0408">Iron</keyword>
<keyword id="KW-0411">Iron-sulfur</keyword>
<keyword id="KW-0479">Metal-binding</keyword>
<keyword id="KW-0949">S-adenosyl-L-methionine</keyword>
<keyword id="KW-0808">Transferase</keyword>
<accession>A3N520</accession>
<reference key="1">
    <citation type="journal article" date="2010" name="Genome Biol. Evol.">
        <title>Continuing evolution of Burkholderia mallei through genome reduction and large-scale rearrangements.</title>
        <authorList>
            <person name="Losada L."/>
            <person name="Ronning C.M."/>
            <person name="DeShazer D."/>
            <person name="Woods D."/>
            <person name="Fedorova N."/>
            <person name="Kim H.S."/>
            <person name="Shabalina S.A."/>
            <person name="Pearson T.R."/>
            <person name="Brinkac L."/>
            <person name="Tan P."/>
            <person name="Nandi T."/>
            <person name="Crabtree J."/>
            <person name="Badger J."/>
            <person name="Beckstrom-Sternberg S."/>
            <person name="Saqib M."/>
            <person name="Schutzer S.E."/>
            <person name="Keim P."/>
            <person name="Nierman W.C."/>
        </authorList>
    </citation>
    <scope>NUCLEOTIDE SEQUENCE [LARGE SCALE GENOMIC DNA]</scope>
    <source>
        <strain>668</strain>
    </source>
</reference>
<gene>
    <name evidence="1" type="primary">bioB</name>
    <name type="ordered locus">BURPS668_0388</name>
</gene>
<proteinExistence type="inferred from homology"/>
<evidence type="ECO:0000255" key="1">
    <source>
        <dbReference type="HAMAP-Rule" id="MF_01694"/>
    </source>
</evidence>
<evidence type="ECO:0000255" key="2">
    <source>
        <dbReference type="PROSITE-ProRule" id="PRU01266"/>
    </source>
</evidence>
<evidence type="ECO:0000305" key="3"/>
<feature type="chain" id="PRO_0000381271" description="Biotin synthase">
    <location>
        <begin position="1"/>
        <end position="336"/>
    </location>
</feature>
<feature type="domain" description="Radical SAM core" evidence="2">
    <location>
        <begin position="54"/>
        <end position="281"/>
    </location>
</feature>
<feature type="binding site" evidence="1">
    <location>
        <position position="69"/>
    </location>
    <ligand>
        <name>[4Fe-4S] cluster</name>
        <dbReference type="ChEBI" id="CHEBI:49883"/>
        <note>4Fe-4S-S-AdoMet</note>
    </ligand>
</feature>
<feature type="binding site" evidence="1">
    <location>
        <position position="73"/>
    </location>
    <ligand>
        <name>[4Fe-4S] cluster</name>
        <dbReference type="ChEBI" id="CHEBI:49883"/>
        <note>4Fe-4S-S-AdoMet</note>
    </ligand>
</feature>
<feature type="binding site" evidence="1">
    <location>
        <position position="76"/>
    </location>
    <ligand>
        <name>[4Fe-4S] cluster</name>
        <dbReference type="ChEBI" id="CHEBI:49883"/>
        <note>4Fe-4S-S-AdoMet</note>
    </ligand>
</feature>
<feature type="binding site" evidence="1">
    <location>
        <position position="113"/>
    </location>
    <ligand>
        <name>[2Fe-2S] cluster</name>
        <dbReference type="ChEBI" id="CHEBI:190135"/>
    </ligand>
</feature>
<feature type="binding site" evidence="1">
    <location>
        <position position="144"/>
    </location>
    <ligand>
        <name>[2Fe-2S] cluster</name>
        <dbReference type="ChEBI" id="CHEBI:190135"/>
    </ligand>
</feature>
<feature type="binding site" evidence="1">
    <location>
        <position position="204"/>
    </location>
    <ligand>
        <name>[2Fe-2S] cluster</name>
        <dbReference type="ChEBI" id="CHEBI:190135"/>
    </ligand>
</feature>
<feature type="binding site" evidence="1">
    <location>
        <position position="276"/>
    </location>
    <ligand>
        <name>[2Fe-2S] cluster</name>
        <dbReference type="ChEBI" id="CHEBI:190135"/>
    </ligand>
</feature>
<name>BIOB_BURP6</name>
<dbReference type="EC" id="2.8.1.6" evidence="1"/>
<dbReference type="EMBL" id="CP000570">
    <property type="protein sequence ID" value="ABN82057.1"/>
    <property type="status" value="ALT_INIT"/>
    <property type="molecule type" value="Genomic_DNA"/>
</dbReference>
<dbReference type="RefSeq" id="WP_004200336.1">
    <property type="nucleotide sequence ID" value="NC_009074.1"/>
</dbReference>
<dbReference type="SMR" id="A3N520"/>
<dbReference type="GeneID" id="93058882"/>
<dbReference type="KEGG" id="bpd:BURPS668_0388"/>
<dbReference type="HOGENOM" id="CLU_033172_1_2_4"/>
<dbReference type="UniPathway" id="UPA00078">
    <property type="reaction ID" value="UER00162"/>
</dbReference>
<dbReference type="GO" id="GO:0051537">
    <property type="term" value="F:2 iron, 2 sulfur cluster binding"/>
    <property type="evidence" value="ECO:0007669"/>
    <property type="project" value="UniProtKB-KW"/>
</dbReference>
<dbReference type="GO" id="GO:0051539">
    <property type="term" value="F:4 iron, 4 sulfur cluster binding"/>
    <property type="evidence" value="ECO:0007669"/>
    <property type="project" value="UniProtKB-KW"/>
</dbReference>
<dbReference type="GO" id="GO:0004076">
    <property type="term" value="F:biotin synthase activity"/>
    <property type="evidence" value="ECO:0007669"/>
    <property type="project" value="UniProtKB-UniRule"/>
</dbReference>
<dbReference type="GO" id="GO:0005506">
    <property type="term" value="F:iron ion binding"/>
    <property type="evidence" value="ECO:0007669"/>
    <property type="project" value="UniProtKB-UniRule"/>
</dbReference>
<dbReference type="GO" id="GO:0009102">
    <property type="term" value="P:biotin biosynthetic process"/>
    <property type="evidence" value="ECO:0007669"/>
    <property type="project" value="UniProtKB-UniRule"/>
</dbReference>
<dbReference type="CDD" id="cd01335">
    <property type="entry name" value="Radical_SAM"/>
    <property type="match status" value="1"/>
</dbReference>
<dbReference type="FunFam" id="3.20.20.70:FF:000011">
    <property type="entry name" value="Biotin synthase"/>
    <property type="match status" value="1"/>
</dbReference>
<dbReference type="Gene3D" id="3.20.20.70">
    <property type="entry name" value="Aldolase class I"/>
    <property type="match status" value="1"/>
</dbReference>
<dbReference type="HAMAP" id="MF_01694">
    <property type="entry name" value="BioB"/>
    <property type="match status" value="1"/>
</dbReference>
<dbReference type="InterPro" id="IPR013785">
    <property type="entry name" value="Aldolase_TIM"/>
</dbReference>
<dbReference type="InterPro" id="IPR010722">
    <property type="entry name" value="BATS_dom"/>
</dbReference>
<dbReference type="InterPro" id="IPR002684">
    <property type="entry name" value="Biotin_synth/BioAB"/>
</dbReference>
<dbReference type="InterPro" id="IPR024177">
    <property type="entry name" value="Biotin_synthase"/>
</dbReference>
<dbReference type="InterPro" id="IPR006638">
    <property type="entry name" value="Elp3/MiaA/NifB-like_rSAM"/>
</dbReference>
<dbReference type="InterPro" id="IPR007197">
    <property type="entry name" value="rSAM"/>
</dbReference>
<dbReference type="NCBIfam" id="TIGR00433">
    <property type="entry name" value="bioB"/>
    <property type="match status" value="1"/>
</dbReference>
<dbReference type="PANTHER" id="PTHR22976">
    <property type="entry name" value="BIOTIN SYNTHASE"/>
    <property type="match status" value="1"/>
</dbReference>
<dbReference type="PANTHER" id="PTHR22976:SF2">
    <property type="entry name" value="BIOTIN SYNTHASE, MITOCHONDRIAL"/>
    <property type="match status" value="1"/>
</dbReference>
<dbReference type="Pfam" id="PF06968">
    <property type="entry name" value="BATS"/>
    <property type="match status" value="1"/>
</dbReference>
<dbReference type="Pfam" id="PF04055">
    <property type="entry name" value="Radical_SAM"/>
    <property type="match status" value="1"/>
</dbReference>
<dbReference type="PIRSF" id="PIRSF001619">
    <property type="entry name" value="Biotin_synth"/>
    <property type="match status" value="1"/>
</dbReference>
<dbReference type="SFLD" id="SFLDF00272">
    <property type="entry name" value="biotin_synthase"/>
    <property type="match status" value="1"/>
</dbReference>
<dbReference type="SFLD" id="SFLDS00029">
    <property type="entry name" value="Radical_SAM"/>
    <property type="match status" value="1"/>
</dbReference>
<dbReference type="SMART" id="SM00876">
    <property type="entry name" value="BATS"/>
    <property type="match status" value="1"/>
</dbReference>
<dbReference type="SMART" id="SM00729">
    <property type="entry name" value="Elp3"/>
    <property type="match status" value="1"/>
</dbReference>
<dbReference type="SUPFAM" id="SSF102114">
    <property type="entry name" value="Radical SAM enzymes"/>
    <property type="match status" value="1"/>
</dbReference>
<dbReference type="PROSITE" id="PS51918">
    <property type="entry name" value="RADICAL_SAM"/>
    <property type="match status" value="1"/>
</dbReference>
<comment type="function">
    <text evidence="1">Catalyzes the conversion of dethiobiotin (DTB) to biotin by the insertion of a sulfur atom into dethiobiotin via a radical-based mechanism.</text>
</comment>
<comment type="catalytic activity">
    <reaction evidence="1">
        <text>(4R,5S)-dethiobiotin + (sulfur carrier)-SH + 2 reduced [2Fe-2S]-[ferredoxin] + 2 S-adenosyl-L-methionine = (sulfur carrier)-H + biotin + 2 5'-deoxyadenosine + 2 L-methionine + 2 oxidized [2Fe-2S]-[ferredoxin]</text>
        <dbReference type="Rhea" id="RHEA:22060"/>
        <dbReference type="Rhea" id="RHEA-COMP:10000"/>
        <dbReference type="Rhea" id="RHEA-COMP:10001"/>
        <dbReference type="Rhea" id="RHEA-COMP:14737"/>
        <dbReference type="Rhea" id="RHEA-COMP:14739"/>
        <dbReference type="ChEBI" id="CHEBI:17319"/>
        <dbReference type="ChEBI" id="CHEBI:29917"/>
        <dbReference type="ChEBI" id="CHEBI:33737"/>
        <dbReference type="ChEBI" id="CHEBI:33738"/>
        <dbReference type="ChEBI" id="CHEBI:57586"/>
        <dbReference type="ChEBI" id="CHEBI:57844"/>
        <dbReference type="ChEBI" id="CHEBI:59789"/>
        <dbReference type="ChEBI" id="CHEBI:64428"/>
        <dbReference type="ChEBI" id="CHEBI:149473"/>
        <dbReference type="EC" id="2.8.1.6"/>
    </reaction>
</comment>
<comment type="cofactor">
    <cofactor evidence="1">
        <name>[4Fe-4S] cluster</name>
        <dbReference type="ChEBI" id="CHEBI:49883"/>
    </cofactor>
    <text evidence="1">Binds 1 [4Fe-4S] cluster. The cluster is coordinated with 3 cysteines and an exchangeable S-adenosyl-L-methionine.</text>
</comment>
<comment type="cofactor">
    <cofactor evidence="1">
        <name>[2Fe-2S] cluster</name>
        <dbReference type="ChEBI" id="CHEBI:190135"/>
    </cofactor>
    <text evidence="1">Binds 1 [2Fe-2S] cluster. The cluster is coordinated with 3 cysteines and 1 arginine.</text>
</comment>
<comment type="pathway">
    <text evidence="1">Cofactor biosynthesis; biotin biosynthesis; biotin from 7,8-diaminononanoate: step 2/2.</text>
</comment>
<comment type="subunit">
    <text evidence="1">Homodimer.</text>
</comment>
<comment type="similarity">
    <text evidence="1">Belongs to the radical SAM superfamily. Biotin synthase family.</text>
</comment>
<comment type="sequence caution" evidence="3">
    <conflict type="erroneous initiation">
        <sequence resource="EMBL-CDS" id="ABN82057"/>
    </conflict>
</comment>
<organism>
    <name type="scientific">Burkholderia pseudomallei (strain 668)</name>
    <dbReference type="NCBI Taxonomy" id="320373"/>
    <lineage>
        <taxon>Bacteria</taxon>
        <taxon>Pseudomonadati</taxon>
        <taxon>Pseudomonadota</taxon>
        <taxon>Betaproteobacteria</taxon>
        <taxon>Burkholderiales</taxon>
        <taxon>Burkholderiaceae</taxon>
        <taxon>Burkholderia</taxon>
        <taxon>pseudomallei group</taxon>
    </lineage>
</organism>
<protein>
    <recommendedName>
        <fullName evidence="1">Biotin synthase</fullName>
        <ecNumber evidence="1">2.8.1.6</ecNumber>
    </recommendedName>
</protein>
<sequence length="336" mass="36668">MTEAQTACATTETPVAAPAAPRWRVADVIALYELPFNDLLFRAQQTHREHFDANAIQLSTLLSIKTGGCEEDCGYCSQSAHHDTGLKAEKLMEVDAVLAAARTAKENGATRFCMGAAWRNPKDRHIEPIKEMIRGVKDMGLETCVTLGMLEEHQAKALAEAGLDYYNHNLDTSPEFYGQIISTRTYQDRLDTLERVRDAGINVCCGGIIGMGESRRERAGLIAQLANMNPYPESVPINNLVAIEGTPLENAQALDPFEFVRTIAVARITMPKAMVRLSAGREQLDDAMQALCFLAGANSMFYGDVLLTTGNPRAEADRKLLARLGMSASEASQLSA</sequence>